<keyword id="KW-0963">Cytoplasm</keyword>
<keyword id="KW-0269">Exonuclease</keyword>
<keyword id="KW-0378">Hydrolase</keyword>
<keyword id="KW-0540">Nuclease</keyword>
<comment type="function">
    <text evidence="1">Bidirectionally degrades single-stranded DNA into large acid-insoluble oligonucleotides, which are then degraded further into small acid-soluble oligonucleotides.</text>
</comment>
<comment type="catalytic activity">
    <reaction evidence="1">
        <text>Exonucleolytic cleavage in either 5'- to 3'- or 3'- to 5'-direction to yield nucleoside 5'-phosphates.</text>
        <dbReference type="EC" id="3.1.11.6"/>
    </reaction>
</comment>
<comment type="subunit">
    <text evidence="1">Heterooligomer composed of large and small subunits.</text>
</comment>
<comment type="subcellular location">
    <subcellularLocation>
        <location evidence="1">Cytoplasm</location>
    </subcellularLocation>
</comment>
<comment type="similarity">
    <text evidence="1">Belongs to the XseB family.</text>
</comment>
<accession>A6VUE7</accession>
<organism>
    <name type="scientific">Marinomonas sp. (strain MWYL1)</name>
    <dbReference type="NCBI Taxonomy" id="400668"/>
    <lineage>
        <taxon>Bacteria</taxon>
        <taxon>Pseudomonadati</taxon>
        <taxon>Pseudomonadota</taxon>
        <taxon>Gammaproteobacteria</taxon>
        <taxon>Oceanospirillales</taxon>
        <taxon>Oceanospirillaceae</taxon>
        <taxon>Marinomonas</taxon>
    </lineage>
</organism>
<gene>
    <name evidence="1" type="primary">xseB</name>
    <name type="ordered locus">Mmwyl1_1147</name>
</gene>
<feature type="chain" id="PRO_1000119939" description="Exodeoxyribonuclease 7 small subunit">
    <location>
        <begin position="1"/>
        <end position="80"/>
    </location>
</feature>
<sequence length="80" mass="9161">MSRKTTVRHFEENLSELDTLVTQLESNQLSLEEALKAFEKGVKLSQECQSVLTQAEQKVQILLEKQDGEHLETFDPELNS</sequence>
<reference key="1">
    <citation type="submission" date="2007-06" db="EMBL/GenBank/DDBJ databases">
        <title>Complete sequence of Marinomonas sp. MWYL1.</title>
        <authorList>
            <consortium name="US DOE Joint Genome Institute"/>
            <person name="Copeland A."/>
            <person name="Lucas S."/>
            <person name="Lapidus A."/>
            <person name="Barry K."/>
            <person name="Glavina del Rio T."/>
            <person name="Dalin E."/>
            <person name="Tice H."/>
            <person name="Pitluck S."/>
            <person name="Kiss H."/>
            <person name="Brettin T."/>
            <person name="Bruce D."/>
            <person name="Detter J.C."/>
            <person name="Han C."/>
            <person name="Schmutz J."/>
            <person name="Larimer F."/>
            <person name="Land M."/>
            <person name="Hauser L."/>
            <person name="Kyrpides N."/>
            <person name="Kim E."/>
            <person name="Johnston A.W.B."/>
            <person name="Todd J.D."/>
            <person name="Rogers R."/>
            <person name="Wexler M."/>
            <person name="Bond P.L."/>
            <person name="Li Y."/>
            <person name="Richardson P."/>
        </authorList>
    </citation>
    <scope>NUCLEOTIDE SEQUENCE [LARGE SCALE GENOMIC DNA]</scope>
    <source>
        <strain>MWYL1</strain>
    </source>
</reference>
<protein>
    <recommendedName>
        <fullName evidence="1">Exodeoxyribonuclease 7 small subunit</fullName>
        <ecNumber evidence="1">3.1.11.6</ecNumber>
    </recommendedName>
    <alternativeName>
        <fullName evidence="1">Exodeoxyribonuclease VII small subunit</fullName>
        <shortName evidence="1">Exonuclease VII small subunit</shortName>
    </alternativeName>
</protein>
<proteinExistence type="inferred from homology"/>
<dbReference type="EC" id="3.1.11.6" evidence="1"/>
<dbReference type="EMBL" id="CP000749">
    <property type="protein sequence ID" value="ABR70076.1"/>
    <property type="molecule type" value="Genomic_DNA"/>
</dbReference>
<dbReference type="SMR" id="A6VUE7"/>
<dbReference type="STRING" id="400668.Mmwyl1_1147"/>
<dbReference type="KEGG" id="mmw:Mmwyl1_1147"/>
<dbReference type="eggNOG" id="COG1722">
    <property type="taxonomic scope" value="Bacteria"/>
</dbReference>
<dbReference type="HOGENOM" id="CLU_145918_3_3_6"/>
<dbReference type="OrthoDB" id="9801128at2"/>
<dbReference type="GO" id="GO:0005829">
    <property type="term" value="C:cytosol"/>
    <property type="evidence" value="ECO:0007669"/>
    <property type="project" value="TreeGrafter"/>
</dbReference>
<dbReference type="GO" id="GO:0009318">
    <property type="term" value="C:exodeoxyribonuclease VII complex"/>
    <property type="evidence" value="ECO:0007669"/>
    <property type="project" value="InterPro"/>
</dbReference>
<dbReference type="GO" id="GO:0008855">
    <property type="term" value="F:exodeoxyribonuclease VII activity"/>
    <property type="evidence" value="ECO:0007669"/>
    <property type="project" value="UniProtKB-UniRule"/>
</dbReference>
<dbReference type="GO" id="GO:0006308">
    <property type="term" value="P:DNA catabolic process"/>
    <property type="evidence" value="ECO:0007669"/>
    <property type="project" value="UniProtKB-UniRule"/>
</dbReference>
<dbReference type="Gene3D" id="1.10.287.1040">
    <property type="entry name" value="Exonuclease VII, small subunit"/>
    <property type="match status" value="1"/>
</dbReference>
<dbReference type="HAMAP" id="MF_00337">
    <property type="entry name" value="Exonuc_7_S"/>
    <property type="match status" value="1"/>
</dbReference>
<dbReference type="InterPro" id="IPR003761">
    <property type="entry name" value="Exonuc_VII_S"/>
</dbReference>
<dbReference type="InterPro" id="IPR037004">
    <property type="entry name" value="Exonuc_VII_ssu_sf"/>
</dbReference>
<dbReference type="NCBIfam" id="NF002140">
    <property type="entry name" value="PRK00977.1-4"/>
    <property type="match status" value="1"/>
</dbReference>
<dbReference type="NCBIfam" id="TIGR01280">
    <property type="entry name" value="xseB"/>
    <property type="match status" value="1"/>
</dbReference>
<dbReference type="PANTHER" id="PTHR34137">
    <property type="entry name" value="EXODEOXYRIBONUCLEASE 7 SMALL SUBUNIT"/>
    <property type="match status" value="1"/>
</dbReference>
<dbReference type="PANTHER" id="PTHR34137:SF1">
    <property type="entry name" value="EXODEOXYRIBONUCLEASE 7 SMALL SUBUNIT"/>
    <property type="match status" value="1"/>
</dbReference>
<dbReference type="Pfam" id="PF02609">
    <property type="entry name" value="Exonuc_VII_S"/>
    <property type="match status" value="1"/>
</dbReference>
<dbReference type="PIRSF" id="PIRSF006488">
    <property type="entry name" value="Exonuc_VII_S"/>
    <property type="match status" value="1"/>
</dbReference>
<dbReference type="SUPFAM" id="SSF116842">
    <property type="entry name" value="XseB-like"/>
    <property type="match status" value="1"/>
</dbReference>
<evidence type="ECO:0000255" key="1">
    <source>
        <dbReference type="HAMAP-Rule" id="MF_00337"/>
    </source>
</evidence>
<name>EX7S_MARMS</name>